<name>PDRP_LACH4</name>
<gene>
    <name type="ordered locus">lhv_1306</name>
</gene>
<keyword id="KW-0418">Kinase</keyword>
<keyword id="KW-0547">Nucleotide-binding</keyword>
<keyword id="KW-0723">Serine/threonine-protein kinase</keyword>
<keyword id="KW-0808">Transferase</keyword>
<comment type="function">
    <text evidence="1">Bifunctional serine/threonine kinase and phosphorylase involved in the regulation of the pyruvate, phosphate dikinase (PPDK) by catalyzing its phosphorylation/dephosphorylation.</text>
</comment>
<comment type="catalytic activity">
    <reaction evidence="1">
        <text>N(tele)-phospho-L-histidyl/L-threonyl-[pyruvate, phosphate dikinase] + ADP = N(tele)-phospho-L-histidyl/O-phospho-L-threonyl-[pyruvate, phosphate dikinase] + AMP + H(+)</text>
        <dbReference type="Rhea" id="RHEA:43692"/>
        <dbReference type="Rhea" id="RHEA-COMP:10650"/>
        <dbReference type="Rhea" id="RHEA-COMP:10651"/>
        <dbReference type="ChEBI" id="CHEBI:15378"/>
        <dbReference type="ChEBI" id="CHEBI:30013"/>
        <dbReference type="ChEBI" id="CHEBI:61977"/>
        <dbReference type="ChEBI" id="CHEBI:83586"/>
        <dbReference type="ChEBI" id="CHEBI:456215"/>
        <dbReference type="ChEBI" id="CHEBI:456216"/>
        <dbReference type="EC" id="2.7.11.32"/>
    </reaction>
</comment>
<comment type="catalytic activity">
    <reaction evidence="1">
        <text>N(tele)-phospho-L-histidyl/O-phospho-L-threonyl-[pyruvate, phosphate dikinase] + phosphate + H(+) = N(tele)-phospho-L-histidyl/L-threonyl-[pyruvate, phosphate dikinase] + diphosphate</text>
        <dbReference type="Rhea" id="RHEA:43696"/>
        <dbReference type="Rhea" id="RHEA-COMP:10650"/>
        <dbReference type="Rhea" id="RHEA-COMP:10651"/>
        <dbReference type="ChEBI" id="CHEBI:15378"/>
        <dbReference type="ChEBI" id="CHEBI:30013"/>
        <dbReference type="ChEBI" id="CHEBI:33019"/>
        <dbReference type="ChEBI" id="CHEBI:43474"/>
        <dbReference type="ChEBI" id="CHEBI:61977"/>
        <dbReference type="ChEBI" id="CHEBI:83586"/>
        <dbReference type="EC" id="2.7.4.27"/>
    </reaction>
</comment>
<comment type="similarity">
    <text evidence="1">Belongs to the pyruvate, phosphate/water dikinase regulatory protein family. PDRP subfamily.</text>
</comment>
<accession>A8YVN2</accession>
<feature type="chain" id="PRO_1000073004" description="Putative pyruvate, phosphate dikinase regulatory protein">
    <location>
        <begin position="1"/>
        <end position="279"/>
    </location>
</feature>
<feature type="binding site" evidence="1">
    <location>
        <begin position="157"/>
        <end position="164"/>
    </location>
    <ligand>
        <name>ADP</name>
        <dbReference type="ChEBI" id="CHEBI:456216"/>
    </ligand>
</feature>
<organism>
    <name type="scientific">Lactobacillus helveticus (strain DPC 4571)</name>
    <dbReference type="NCBI Taxonomy" id="405566"/>
    <lineage>
        <taxon>Bacteria</taxon>
        <taxon>Bacillati</taxon>
        <taxon>Bacillota</taxon>
        <taxon>Bacilli</taxon>
        <taxon>Lactobacillales</taxon>
        <taxon>Lactobacillaceae</taxon>
        <taxon>Lactobacillus</taxon>
    </lineage>
</organism>
<reference key="1">
    <citation type="journal article" date="2008" name="J. Bacteriol.">
        <title>Genome sequence of Lactobacillus helveticus: an organism distinguished by selective gene loss and IS element expansion.</title>
        <authorList>
            <person name="Callanan M."/>
            <person name="Kaleta P."/>
            <person name="O'Callaghan J."/>
            <person name="O'Sullivan O."/>
            <person name="Jordan K."/>
            <person name="McAuliffe O."/>
            <person name="Sangrador-Vegas A."/>
            <person name="Slattery L."/>
            <person name="Fitzgerald G.F."/>
            <person name="Beresford T."/>
            <person name="Ross R.P."/>
        </authorList>
    </citation>
    <scope>NUCLEOTIDE SEQUENCE [LARGE SCALE GENOMIC DNA]</scope>
    <source>
        <strain>DPC 4571</strain>
    </source>
</reference>
<dbReference type="EC" id="2.7.11.32" evidence="1"/>
<dbReference type="EC" id="2.7.4.27" evidence="1"/>
<dbReference type="EMBL" id="CP000517">
    <property type="protein sequence ID" value="ABX27319.1"/>
    <property type="molecule type" value="Genomic_DNA"/>
</dbReference>
<dbReference type="RefSeq" id="WP_012211980.1">
    <property type="nucleotide sequence ID" value="NC_010080.1"/>
</dbReference>
<dbReference type="SMR" id="A8YVN2"/>
<dbReference type="KEGG" id="lhe:lhv_1306"/>
<dbReference type="eggNOG" id="COG1806">
    <property type="taxonomic scope" value="Bacteria"/>
</dbReference>
<dbReference type="HOGENOM" id="CLU_046206_2_1_9"/>
<dbReference type="Proteomes" id="UP000000790">
    <property type="component" value="Chromosome"/>
</dbReference>
<dbReference type="GO" id="GO:0043531">
    <property type="term" value="F:ADP binding"/>
    <property type="evidence" value="ECO:0007669"/>
    <property type="project" value="UniProtKB-UniRule"/>
</dbReference>
<dbReference type="GO" id="GO:0005524">
    <property type="term" value="F:ATP binding"/>
    <property type="evidence" value="ECO:0007669"/>
    <property type="project" value="InterPro"/>
</dbReference>
<dbReference type="GO" id="GO:0016776">
    <property type="term" value="F:phosphotransferase activity, phosphate group as acceptor"/>
    <property type="evidence" value="ECO:0007669"/>
    <property type="project" value="UniProtKB-UniRule"/>
</dbReference>
<dbReference type="GO" id="GO:0004674">
    <property type="term" value="F:protein serine/threonine kinase activity"/>
    <property type="evidence" value="ECO:0007669"/>
    <property type="project" value="UniProtKB-UniRule"/>
</dbReference>
<dbReference type="HAMAP" id="MF_00921">
    <property type="entry name" value="PDRP"/>
    <property type="match status" value="1"/>
</dbReference>
<dbReference type="InterPro" id="IPR005177">
    <property type="entry name" value="Kinase-pyrophosphorylase"/>
</dbReference>
<dbReference type="InterPro" id="IPR027417">
    <property type="entry name" value="P-loop_NTPase"/>
</dbReference>
<dbReference type="InterPro" id="IPR026565">
    <property type="entry name" value="PPDK_reg"/>
</dbReference>
<dbReference type="NCBIfam" id="NF003742">
    <property type="entry name" value="PRK05339.1"/>
    <property type="match status" value="1"/>
</dbReference>
<dbReference type="PANTHER" id="PTHR31756">
    <property type="entry name" value="PYRUVATE, PHOSPHATE DIKINASE REGULATORY PROTEIN 1, CHLOROPLASTIC"/>
    <property type="match status" value="1"/>
</dbReference>
<dbReference type="PANTHER" id="PTHR31756:SF3">
    <property type="entry name" value="PYRUVATE, PHOSPHATE DIKINASE REGULATORY PROTEIN 1, CHLOROPLASTIC"/>
    <property type="match status" value="1"/>
</dbReference>
<dbReference type="Pfam" id="PF03618">
    <property type="entry name" value="Kinase-PPPase"/>
    <property type="match status" value="1"/>
</dbReference>
<dbReference type="SUPFAM" id="SSF52540">
    <property type="entry name" value="P-loop containing nucleoside triphosphate hydrolases"/>
    <property type="match status" value="1"/>
</dbReference>
<sequence>MAETKDQQNEVNIIIISDAAGDTAFSNATAAAAEFPKAQINYRRYPFITNKDKLDEVLEEIEKYPNLVIIYSLVKDEMQMPVIKFAREHNIQCVDIFSPVVEAIKQTTHMTPDQKIGAQHSLNQKYFDRISAMEFAVMYDDGKDPKGFLEADVVLLGVSRTSKTPLSLFLANKNLKVANLPLVPETHIPKEIYEIDPKKIIGLTNDPSVLNEIRRQRMIAYGLNPDTTYSNMDSINKELESAQALYKKLGCYVINVAHRSIEETAALILEHLGIDDYAK</sequence>
<evidence type="ECO:0000255" key="1">
    <source>
        <dbReference type="HAMAP-Rule" id="MF_00921"/>
    </source>
</evidence>
<protein>
    <recommendedName>
        <fullName evidence="1">Putative pyruvate, phosphate dikinase regulatory protein</fullName>
        <shortName evidence="1">PPDK regulatory protein</shortName>
        <ecNumber evidence="1">2.7.11.32</ecNumber>
        <ecNumber evidence="1">2.7.4.27</ecNumber>
    </recommendedName>
</protein>
<proteinExistence type="inferred from homology"/>